<protein>
    <recommendedName>
        <fullName evidence="5">(DL)-glycerol-3-phosphatase 1, mitochondrial</fullName>
        <ecNumber evidence="3">3.1.3.21</ecNumber>
    </recommendedName>
    <alternativeName>
        <fullName evidence="8">5-amino-6-(5-phospho-D-ribitylamino)uracil phosphatase</fullName>
        <shortName evidence="6">AtGpp1/PyrP3</shortName>
        <ecNumber evidence="4">3.1.3.104</ecNumber>
    </alternativeName>
    <alternativeName>
        <fullName evidence="8">5-amino-6-ribitylamino-2,4(1H,3H)-pyrimidinedione 5'-phosphate phosphatase</fullName>
        <shortName evidence="8">ARPP phosphatase</shortName>
    </alternativeName>
    <alternativeName>
        <fullName evidence="5">Glycerol-1-phosphatase 1</fullName>
        <shortName evidence="5">AtGPP1</shortName>
    </alternativeName>
    <alternativeName>
        <fullName evidence="5">Haloacid dehalogenase-like hydrolase domain-containing protein GPP1</fullName>
    </alternativeName>
</protein>
<feature type="transit peptide" description="Mitochondrion" evidence="2">
    <location>
        <begin position="1"/>
        <end position="46"/>
    </location>
</feature>
<feature type="chain" id="PRO_0000424317" description="(DL)-glycerol-3-phosphatase 1, mitochondrial">
    <location>
        <begin position="47"/>
        <end position="298"/>
    </location>
</feature>
<feature type="active site" description="Nucleophile" evidence="1">
    <location>
        <position position="77"/>
    </location>
</feature>
<feature type="active site" description="Proton donor" evidence="1">
    <location>
        <position position="79"/>
    </location>
</feature>
<feature type="binding site" evidence="1">
    <location>
        <position position="77"/>
    </location>
    <ligand>
        <name>Mg(2+)</name>
        <dbReference type="ChEBI" id="CHEBI:18420"/>
    </ligand>
</feature>
<feature type="binding site" evidence="1">
    <location>
        <position position="79"/>
    </location>
    <ligand>
        <name>Mg(2+)</name>
        <dbReference type="ChEBI" id="CHEBI:18420"/>
    </ligand>
</feature>
<feature type="binding site" evidence="1">
    <location>
        <position position="242"/>
    </location>
    <ligand>
        <name>Mg(2+)</name>
        <dbReference type="ChEBI" id="CHEBI:18420"/>
    </ligand>
</feature>
<feature type="sequence conflict" description="In Ref. 3; AAM67188." evidence="7" ref="3">
    <original>N</original>
    <variation>D</variation>
    <location>
        <position position="58"/>
    </location>
</feature>
<feature type="sequence conflict" description="In Ref. 3; AAM67188." evidence="7" ref="3">
    <original>S</original>
    <variation>P</variation>
    <location>
        <position position="263"/>
    </location>
</feature>
<gene>
    <name evidence="5" type="primary">GPP1</name>
    <name evidence="6" type="synonym">PYRP3</name>
    <name evidence="9" type="ordered locus">At4g25840</name>
    <name evidence="10" type="ORF">F14M19.120</name>
</gene>
<proteinExistence type="evidence at protein level"/>
<reference key="1">
    <citation type="journal article" date="1999" name="Nature">
        <title>Sequence and analysis of chromosome 4 of the plant Arabidopsis thaliana.</title>
        <authorList>
            <person name="Mayer K.F.X."/>
            <person name="Schueller C."/>
            <person name="Wambutt R."/>
            <person name="Murphy G."/>
            <person name="Volckaert G."/>
            <person name="Pohl T."/>
            <person name="Duesterhoeft A."/>
            <person name="Stiekema W."/>
            <person name="Entian K.-D."/>
            <person name="Terryn N."/>
            <person name="Harris B."/>
            <person name="Ansorge W."/>
            <person name="Brandt P."/>
            <person name="Grivell L.A."/>
            <person name="Rieger M."/>
            <person name="Weichselgartner M."/>
            <person name="de Simone V."/>
            <person name="Obermaier B."/>
            <person name="Mache R."/>
            <person name="Mueller M."/>
            <person name="Kreis M."/>
            <person name="Delseny M."/>
            <person name="Puigdomenech P."/>
            <person name="Watson M."/>
            <person name="Schmidtheini T."/>
            <person name="Reichert B."/>
            <person name="Portetelle D."/>
            <person name="Perez-Alonso M."/>
            <person name="Boutry M."/>
            <person name="Bancroft I."/>
            <person name="Vos P."/>
            <person name="Hoheisel J."/>
            <person name="Zimmermann W."/>
            <person name="Wedler H."/>
            <person name="Ridley P."/>
            <person name="Langham S.-A."/>
            <person name="McCullagh B."/>
            <person name="Bilham L."/>
            <person name="Robben J."/>
            <person name="van der Schueren J."/>
            <person name="Grymonprez B."/>
            <person name="Chuang Y.-J."/>
            <person name="Vandenbussche F."/>
            <person name="Braeken M."/>
            <person name="Weltjens I."/>
            <person name="Voet M."/>
            <person name="Bastiaens I."/>
            <person name="Aert R."/>
            <person name="Defoor E."/>
            <person name="Weitzenegger T."/>
            <person name="Bothe G."/>
            <person name="Ramsperger U."/>
            <person name="Hilbert H."/>
            <person name="Braun M."/>
            <person name="Holzer E."/>
            <person name="Brandt A."/>
            <person name="Peters S."/>
            <person name="van Staveren M."/>
            <person name="Dirkse W."/>
            <person name="Mooijman P."/>
            <person name="Klein Lankhorst R."/>
            <person name="Rose M."/>
            <person name="Hauf J."/>
            <person name="Koetter P."/>
            <person name="Berneiser S."/>
            <person name="Hempel S."/>
            <person name="Feldpausch M."/>
            <person name="Lamberth S."/>
            <person name="Van den Daele H."/>
            <person name="De Keyser A."/>
            <person name="Buysshaert C."/>
            <person name="Gielen J."/>
            <person name="Villarroel R."/>
            <person name="De Clercq R."/>
            <person name="van Montagu M."/>
            <person name="Rogers J."/>
            <person name="Cronin A."/>
            <person name="Quail M.A."/>
            <person name="Bray-Allen S."/>
            <person name="Clark L."/>
            <person name="Doggett J."/>
            <person name="Hall S."/>
            <person name="Kay M."/>
            <person name="Lennard N."/>
            <person name="McLay K."/>
            <person name="Mayes R."/>
            <person name="Pettett A."/>
            <person name="Rajandream M.A."/>
            <person name="Lyne M."/>
            <person name="Benes V."/>
            <person name="Rechmann S."/>
            <person name="Borkova D."/>
            <person name="Bloecker H."/>
            <person name="Scharfe M."/>
            <person name="Grimm M."/>
            <person name="Loehnert T.-H."/>
            <person name="Dose S."/>
            <person name="de Haan M."/>
            <person name="Maarse A.C."/>
            <person name="Schaefer M."/>
            <person name="Mueller-Auer S."/>
            <person name="Gabel C."/>
            <person name="Fuchs M."/>
            <person name="Fartmann B."/>
            <person name="Granderath K."/>
            <person name="Dauner D."/>
            <person name="Herzl A."/>
            <person name="Neumann S."/>
            <person name="Argiriou A."/>
            <person name="Vitale D."/>
            <person name="Liguori R."/>
            <person name="Piravandi E."/>
            <person name="Massenet O."/>
            <person name="Quigley F."/>
            <person name="Clabauld G."/>
            <person name="Muendlein A."/>
            <person name="Felber R."/>
            <person name="Schnabl S."/>
            <person name="Hiller R."/>
            <person name="Schmidt W."/>
            <person name="Lecharny A."/>
            <person name="Aubourg S."/>
            <person name="Chefdor F."/>
            <person name="Cooke R."/>
            <person name="Berger C."/>
            <person name="Monfort A."/>
            <person name="Casacuberta E."/>
            <person name="Gibbons T."/>
            <person name="Weber N."/>
            <person name="Vandenbol M."/>
            <person name="Bargues M."/>
            <person name="Terol J."/>
            <person name="Torres A."/>
            <person name="Perez-Perez A."/>
            <person name="Purnelle B."/>
            <person name="Bent E."/>
            <person name="Johnson S."/>
            <person name="Tacon D."/>
            <person name="Jesse T."/>
            <person name="Heijnen L."/>
            <person name="Schwarz S."/>
            <person name="Scholler P."/>
            <person name="Heber S."/>
            <person name="Francs P."/>
            <person name="Bielke C."/>
            <person name="Frishman D."/>
            <person name="Haase D."/>
            <person name="Lemcke K."/>
            <person name="Mewes H.-W."/>
            <person name="Stocker S."/>
            <person name="Zaccaria P."/>
            <person name="Bevan M."/>
            <person name="Wilson R.K."/>
            <person name="de la Bastide M."/>
            <person name="Habermann K."/>
            <person name="Parnell L."/>
            <person name="Dedhia N."/>
            <person name="Gnoj L."/>
            <person name="Schutz K."/>
            <person name="Huang E."/>
            <person name="Spiegel L."/>
            <person name="Sekhon M."/>
            <person name="Murray J."/>
            <person name="Sheet P."/>
            <person name="Cordes M."/>
            <person name="Abu-Threideh J."/>
            <person name="Stoneking T."/>
            <person name="Kalicki J."/>
            <person name="Graves T."/>
            <person name="Harmon G."/>
            <person name="Edwards J."/>
            <person name="Latreille P."/>
            <person name="Courtney L."/>
            <person name="Cloud J."/>
            <person name="Abbott A."/>
            <person name="Scott K."/>
            <person name="Johnson D."/>
            <person name="Minx P."/>
            <person name="Bentley D."/>
            <person name="Fulton B."/>
            <person name="Miller N."/>
            <person name="Greco T."/>
            <person name="Kemp K."/>
            <person name="Kramer J."/>
            <person name="Fulton L."/>
            <person name="Mardis E."/>
            <person name="Dante M."/>
            <person name="Pepin K."/>
            <person name="Hillier L.W."/>
            <person name="Nelson J."/>
            <person name="Spieth J."/>
            <person name="Ryan E."/>
            <person name="Andrews S."/>
            <person name="Geisel C."/>
            <person name="Layman D."/>
            <person name="Du H."/>
            <person name="Ali J."/>
            <person name="Berghoff A."/>
            <person name="Jones K."/>
            <person name="Drone K."/>
            <person name="Cotton M."/>
            <person name="Joshu C."/>
            <person name="Antonoiu B."/>
            <person name="Zidanic M."/>
            <person name="Strong C."/>
            <person name="Sun H."/>
            <person name="Lamar B."/>
            <person name="Yordan C."/>
            <person name="Ma P."/>
            <person name="Zhong J."/>
            <person name="Preston R."/>
            <person name="Vil D."/>
            <person name="Shekher M."/>
            <person name="Matero A."/>
            <person name="Shah R."/>
            <person name="Swaby I.K."/>
            <person name="O'Shaughnessy A."/>
            <person name="Rodriguez M."/>
            <person name="Hoffman J."/>
            <person name="Till S."/>
            <person name="Granat S."/>
            <person name="Shohdy N."/>
            <person name="Hasegawa A."/>
            <person name="Hameed A."/>
            <person name="Lodhi M."/>
            <person name="Johnson A."/>
            <person name="Chen E."/>
            <person name="Marra M.A."/>
            <person name="Martienssen R."/>
            <person name="McCombie W.R."/>
        </authorList>
    </citation>
    <scope>NUCLEOTIDE SEQUENCE [LARGE SCALE GENOMIC DNA]</scope>
    <source>
        <strain>cv. Columbia</strain>
    </source>
</reference>
<reference key="2">
    <citation type="journal article" date="2017" name="Plant J.">
        <title>Araport11: a complete reannotation of the Arabidopsis thaliana reference genome.</title>
        <authorList>
            <person name="Cheng C.Y."/>
            <person name="Krishnakumar V."/>
            <person name="Chan A.P."/>
            <person name="Thibaud-Nissen F."/>
            <person name="Schobel S."/>
            <person name="Town C.D."/>
        </authorList>
    </citation>
    <scope>GENOME REANNOTATION</scope>
    <source>
        <strain>cv. Columbia</strain>
    </source>
</reference>
<reference key="3">
    <citation type="submission" date="2002-03" db="EMBL/GenBank/DDBJ databases">
        <title>Full-length cDNA from Arabidopsis thaliana.</title>
        <authorList>
            <person name="Brover V.V."/>
            <person name="Troukhan M.E."/>
            <person name="Alexandrov N.A."/>
            <person name="Lu Y.-P."/>
            <person name="Flavell R.B."/>
            <person name="Feldmann K.A."/>
        </authorList>
    </citation>
    <scope>NUCLEOTIDE SEQUENCE [LARGE SCALE MRNA]</scope>
</reference>
<reference key="4">
    <citation type="journal article" date="2002" name="Science">
        <title>Functional annotation of a full-length Arabidopsis cDNA collection.</title>
        <authorList>
            <person name="Seki M."/>
            <person name="Narusaka M."/>
            <person name="Kamiya A."/>
            <person name="Ishida J."/>
            <person name="Satou M."/>
            <person name="Sakurai T."/>
            <person name="Nakajima M."/>
            <person name="Enju A."/>
            <person name="Akiyama K."/>
            <person name="Oono Y."/>
            <person name="Muramatsu M."/>
            <person name="Hayashizaki Y."/>
            <person name="Kawai J."/>
            <person name="Carninci P."/>
            <person name="Itoh M."/>
            <person name="Ishii Y."/>
            <person name="Arakawa T."/>
            <person name="Shibata K."/>
            <person name="Shinagawa A."/>
            <person name="Shinozaki K."/>
        </authorList>
    </citation>
    <scope>NUCLEOTIDE SEQUENCE [LARGE SCALE MRNA] OF 15-298</scope>
    <source>
        <strain>cv. Columbia</strain>
    </source>
</reference>
<reference key="5">
    <citation type="journal article" date="2003" name="Science">
        <title>Empirical analysis of transcriptional activity in the Arabidopsis genome.</title>
        <authorList>
            <person name="Yamada K."/>
            <person name="Lim J."/>
            <person name="Dale J.M."/>
            <person name="Chen H."/>
            <person name="Shinn P."/>
            <person name="Palm C.J."/>
            <person name="Southwick A.M."/>
            <person name="Wu H.C."/>
            <person name="Kim C.J."/>
            <person name="Nguyen M."/>
            <person name="Pham P.K."/>
            <person name="Cheuk R.F."/>
            <person name="Karlin-Newmann G."/>
            <person name="Liu S.X."/>
            <person name="Lam B."/>
            <person name="Sakano H."/>
            <person name="Wu T."/>
            <person name="Yu G."/>
            <person name="Miranda M."/>
            <person name="Quach H.L."/>
            <person name="Tripp M."/>
            <person name="Chang C.H."/>
            <person name="Lee J.M."/>
            <person name="Toriumi M.J."/>
            <person name="Chan M.M."/>
            <person name="Tang C.C."/>
            <person name="Onodera C.S."/>
            <person name="Deng J.M."/>
            <person name="Akiyama K."/>
            <person name="Ansari Y."/>
            <person name="Arakawa T."/>
            <person name="Banh J."/>
            <person name="Banno F."/>
            <person name="Bowser L."/>
            <person name="Brooks S.Y."/>
            <person name="Carninci P."/>
            <person name="Chao Q."/>
            <person name="Choy N."/>
            <person name="Enju A."/>
            <person name="Goldsmith A.D."/>
            <person name="Gurjal M."/>
            <person name="Hansen N.F."/>
            <person name="Hayashizaki Y."/>
            <person name="Johnson-Hopson C."/>
            <person name="Hsuan V.W."/>
            <person name="Iida K."/>
            <person name="Karnes M."/>
            <person name="Khan S."/>
            <person name="Koesema E."/>
            <person name="Ishida J."/>
            <person name="Jiang P.X."/>
            <person name="Jones T."/>
            <person name="Kawai J."/>
            <person name="Kamiya A."/>
            <person name="Meyers C."/>
            <person name="Nakajima M."/>
            <person name="Narusaka M."/>
            <person name="Seki M."/>
            <person name="Sakurai T."/>
            <person name="Satou M."/>
            <person name="Tamse R."/>
            <person name="Vaysberg M."/>
            <person name="Wallender E.K."/>
            <person name="Wong C."/>
            <person name="Yamamura Y."/>
            <person name="Yuan S."/>
            <person name="Shinozaki K."/>
            <person name="Davis R.W."/>
            <person name="Theologis A."/>
            <person name="Ecker J.R."/>
        </authorList>
    </citation>
    <scope>NUCLEOTIDE SEQUENCE [LARGE SCALE MRNA] OF 50-298</scope>
    <source>
        <strain>cv. Columbia</strain>
    </source>
</reference>
<reference key="6">
    <citation type="journal article" date="2007" name="Plant Mol. Biol.">
        <title>Arabidopsis thaliana AtGppl and AtGpp2: two novel low molecular weight phosphatases involved in plant glycerol metabolism.</title>
        <authorList>
            <person name="Caparros-Martin J.A."/>
            <person name="Reiland S."/>
            <person name="Koechert K."/>
            <person name="Cutanda M.C."/>
            <person name="Culianez-Macia F.A."/>
        </authorList>
    </citation>
    <scope>BIOPHYSICOCHEMICAL PROPERTIES</scope>
    <scope>CATALYTIC ACTIVITY</scope>
    <scope>TISSUE SPECIFICITY</scope>
    <scope>SUBCELLULAR LOCATION</scope>
    <scope>FUNCTION</scope>
</reference>
<reference key="7">
    <citation type="journal article" date="2016" name="Plant J.">
        <title>Identification and characterization of the missing phosphatase on the riboflavin biosynthesis pathway in Arabidopsis thaliana.</title>
        <authorList>
            <person name="Sa N."/>
            <person name="Rawat R."/>
            <person name="Thornburg C."/>
            <person name="Walker K.D."/>
            <person name="Roje S."/>
        </authorList>
    </citation>
    <scope>FUNCTION</scope>
    <scope>CATALYTIC ACTIVITY</scope>
    <scope>SUBCELLULAR LOCATION</scope>
</reference>
<accession>F4JTE7</accession>
<accession>Q8GW23</accession>
<accession>Q8L8P9</accession>
<accession>Q9SW01</accession>
<dbReference type="EC" id="3.1.3.21" evidence="3"/>
<dbReference type="EC" id="3.1.3.104" evidence="4"/>
<dbReference type="EMBL" id="AL049480">
    <property type="protein sequence ID" value="CAB39605.1"/>
    <property type="status" value="ALT_INIT"/>
    <property type="molecule type" value="Genomic_DNA"/>
</dbReference>
<dbReference type="EMBL" id="AL161564">
    <property type="protein sequence ID" value="CAB79439.1"/>
    <property type="status" value="ALT_INIT"/>
    <property type="molecule type" value="Genomic_DNA"/>
</dbReference>
<dbReference type="EMBL" id="CP002687">
    <property type="protein sequence ID" value="AEE85121.1"/>
    <property type="molecule type" value="Genomic_DNA"/>
</dbReference>
<dbReference type="EMBL" id="AY088882">
    <property type="protein sequence ID" value="AAM67188.1"/>
    <property type="molecule type" value="mRNA"/>
</dbReference>
<dbReference type="EMBL" id="AK119129">
    <property type="protein sequence ID" value="BAC43699.1"/>
    <property type="status" value="ALT_INIT"/>
    <property type="molecule type" value="mRNA"/>
</dbReference>
<dbReference type="EMBL" id="BT005264">
    <property type="protein sequence ID" value="AAO63328.1"/>
    <property type="molecule type" value="mRNA"/>
</dbReference>
<dbReference type="PIR" id="T04238">
    <property type="entry name" value="T04238"/>
</dbReference>
<dbReference type="RefSeq" id="NP_567731.1">
    <property type="nucleotide sequence ID" value="NM_118717.3"/>
</dbReference>
<dbReference type="SMR" id="F4JTE7"/>
<dbReference type="FunCoup" id="F4JTE7">
    <property type="interactions" value="2836"/>
</dbReference>
<dbReference type="STRING" id="3702.F4JTE7"/>
<dbReference type="iPTMnet" id="F4JTE7"/>
<dbReference type="PaxDb" id="3702-AT4G25840.1"/>
<dbReference type="ProteomicsDB" id="220619"/>
<dbReference type="EnsemblPlants" id="AT4G25840.1">
    <property type="protein sequence ID" value="AT4G25840.1"/>
    <property type="gene ID" value="AT4G25840"/>
</dbReference>
<dbReference type="GeneID" id="828690"/>
<dbReference type="Gramene" id="AT4G25840.1">
    <property type="protein sequence ID" value="AT4G25840.1"/>
    <property type="gene ID" value="AT4G25840"/>
</dbReference>
<dbReference type="KEGG" id="ath:AT4G25840"/>
<dbReference type="Araport" id="AT4G25840"/>
<dbReference type="TAIR" id="AT4G25840">
    <property type="gene designation" value="GPP1"/>
</dbReference>
<dbReference type="eggNOG" id="KOG2914">
    <property type="taxonomic scope" value="Eukaryota"/>
</dbReference>
<dbReference type="HOGENOM" id="CLU_045011_13_0_1"/>
<dbReference type="InParanoid" id="F4JTE7"/>
<dbReference type="OMA" id="FHHMVMG"/>
<dbReference type="PRO" id="PR:F4JTE7"/>
<dbReference type="Proteomes" id="UP000006548">
    <property type="component" value="Chromosome 4"/>
</dbReference>
<dbReference type="ExpressionAtlas" id="F4JTE7">
    <property type="expression patterns" value="baseline and differential"/>
</dbReference>
<dbReference type="GO" id="GO:0005739">
    <property type="term" value="C:mitochondrion"/>
    <property type="evidence" value="ECO:0000314"/>
    <property type="project" value="TAIR"/>
</dbReference>
<dbReference type="GO" id="GO:0043726">
    <property type="term" value="F:5-amino-6-(5-phosphoribitylamino)uracil phosphatase activity"/>
    <property type="evidence" value="ECO:0007669"/>
    <property type="project" value="UniProtKB-EC"/>
</dbReference>
<dbReference type="GO" id="GO:0000121">
    <property type="term" value="F:glycerol-1-phosphatase activity"/>
    <property type="evidence" value="ECO:0007669"/>
    <property type="project" value="RHEA"/>
</dbReference>
<dbReference type="GO" id="GO:0043136">
    <property type="term" value="F:glycerol-3-phosphatase activity"/>
    <property type="evidence" value="ECO:0000314"/>
    <property type="project" value="UniProtKB"/>
</dbReference>
<dbReference type="GO" id="GO:0046872">
    <property type="term" value="F:metal ion binding"/>
    <property type="evidence" value="ECO:0007669"/>
    <property type="project" value="UniProtKB-KW"/>
</dbReference>
<dbReference type="GO" id="GO:0016311">
    <property type="term" value="P:dephosphorylation"/>
    <property type="evidence" value="ECO:0000314"/>
    <property type="project" value="UniProtKB"/>
</dbReference>
<dbReference type="GO" id="GO:0006114">
    <property type="term" value="P:glycerol biosynthetic process"/>
    <property type="evidence" value="ECO:0000315"/>
    <property type="project" value="UniProtKB"/>
</dbReference>
<dbReference type="GO" id="GO:0009231">
    <property type="term" value="P:riboflavin biosynthetic process"/>
    <property type="evidence" value="ECO:0007669"/>
    <property type="project" value="UniProtKB-KW"/>
</dbReference>
<dbReference type="CDD" id="cd07529">
    <property type="entry name" value="HAD_AtGPP-like"/>
    <property type="match status" value="1"/>
</dbReference>
<dbReference type="FunFam" id="1.10.150.240:FF:000001">
    <property type="entry name" value="Haloacid dehalogenase-like hydrolase domain"/>
    <property type="match status" value="1"/>
</dbReference>
<dbReference type="FunFam" id="3.40.50.1000:FF:000055">
    <property type="entry name" value="Haloacid dehalogenase-like hydrolase family protein"/>
    <property type="match status" value="1"/>
</dbReference>
<dbReference type="Gene3D" id="3.40.50.1000">
    <property type="entry name" value="HAD superfamily/HAD-like"/>
    <property type="match status" value="1"/>
</dbReference>
<dbReference type="Gene3D" id="1.10.150.240">
    <property type="entry name" value="Putative phosphatase, domain 2"/>
    <property type="match status" value="1"/>
</dbReference>
<dbReference type="InterPro" id="IPR045228">
    <property type="entry name" value="Gpp1/Gpp2-like"/>
</dbReference>
<dbReference type="InterPro" id="IPR036412">
    <property type="entry name" value="HAD-like_sf"/>
</dbReference>
<dbReference type="InterPro" id="IPR006439">
    <property type="entry name" value="HAD-SF_hydro_IA"/>
</dbReference>
<dbReference type="InterPro" id="IPR023214">
    <property type="entry name" value="HAD_sf"/>
</dbReference>
<dbReference type="InterPro" id="IPR023198">
    <property type="entry name" value="PGP-like_dom2"/>
</dbReference>
<dbReference type="NCBIfam" id="TIGR01509">
    <property type="entry name" value="HAD-SF-IA-v3"/>
    <property type="match status" value="1"/>
</dbReference>
<dbReference type="PANTHER" id="PTHR18901:SF41">
    <property type="entry name" value="(DL)-GLYCEROL-3-PHOSPHATASE 1, MITOCHONDRIAL"/>
    <property type="match status" value="1"/>
</dbReference>
<dbReference type="PANTHER" id="PTHR18901">
    <property type="entry name" value="2-DEOXYGLUCOSE-6-PHOSPHATE PHOSPHATASE 2"/>
    <property type="match status" value="1"/>
</dbReference>
<dbReference type="Pfam" id="PF00702">
    <property type="entry name" value="Hydrolase"/>
    <property type="match status" value="1"/>
</dbReference>
<dbReference type="SFLD" id="SFLDG01135">
    <property type="entry name" value="C1.5.6:_HAD__Beta-PGM__Phospha"/>
    <property type="match status" value="1"/>
</dbReference>
<dbReference type="SFLD" id="SFLDG01129">
    <property type="entry name" value="C1.5:_HAD__Beta-PGM__Phosphata"/>
    <property type="match status" value="1"/>
</dbReference>
<dbReference type="SUPFAM" id="SSF56784">
    <property type="entry name" value="HAD-like"/>
    <property type="match status" value="1"/>
</dbReference>
<name>GPP1_ARATH</name>
<organism>
    <name type="scientific">Arabidopsis thaliana</name>
    <name type="common">Mouse-ear cress</name>
    <dbReference type="NCBI Taxonomy" id="3702"/>
    <lineage>
        <taxon>Eukaryota</taxon>
        <taxon>Viridiplantae</taxon>
        <taxon>Streptophyta</taxon>
        <taxon>Embryophyta</taxon>
        <taxon>Tracheophyta</taxon>
        <taxon>Spermatophyta</taxon>
        <taxon>Magnoliopsida</taxon>
        <taxon>eudicotyledons</taxon>
        <taxon>Gunneridae</taxon>
        <taxon>Pentapetalae</taxon>
        <taxon>rosids</taxon>
        <taxon>malvids</taxon>
        <taxon>Brassicales</taxon>
        <taxon>Brassicaceae</taxon>
        <taxon>Camelineae</taxon>
        <taxon>Arabidopsis</taxon>
    </lineage>
</organism>
<comment type="function">
    <text evidence="3 4">Acts as a glycerol-3-phosphatase with higher stereospecificity for L-glycerol-3-phosphate than DL-glycerol-3-phosphate (PubMed:17136424). Can also dephosphorylate in vitro 5-amino-6-(5-phospho-D-ribitylamino)uracil, also known as ARPP (PubMed:27490826).</text>
</comment>
<comment type="catalytic activity">
    <reaction evidence="3">
        <text>sn-glycerol 1-phosphate + H2O = glycerol + phosphate</text>
        <dbReference type="Rhea" id="RHEA:46084"/>
        <dbReference type="ChEBI" id="CHEBI:15377"/>
        <dbReference type="ChEBI" id="CHEBI:17754"/>
        <dbReference type="ChEBI" id="CHEBI:43474"/>
        <dbReference type="ChEBI" id="CHEBI:57685"/>
        <dbReference type="EC" id="3.1.3.21"/>
    </reaction>
</comment>
<comment type="catalytic activity">
    <reaction evidence="3">
        <text>sn-glycerol 3-phosphate + H2O = glycerol + phosphate</text>
        <dbReference type="Rhea" id="RHEA:66372"/>
        <dbReference type="ChEBI" id="CHEBI:15377"/>
        <dbReference type="ChEBI" id="CHEBI:17754"/>
        <dbReference type="ChEBI" id="CHEBI:43474"/>
        <dbReference type="ChEBI" id="CHEBI:57597"/>
        <dbReference type="EC" id="3.1.3.21"/>
    </reaction>
</comment>
<comment type="catalytic activity">
    <reaction evidence="4">
        <text>5-amino-6-(5-phospho-D-ribitylamino)uracil + H2O = 5-amino-6-(D-ribitylamino)uracil + phosphate</text>
        <dbReference type="Rhea" id="RHEA:25197"/>
        <dbReference type="ChEBI" id="CHEBI:15377"/>
        <dbReference type="ChEBI" id="CHEBI:15934"/>
        <dbReference type="ChEBI" id="CHEBI:43474"/>
        <dbReference type="ChEBI" id="CHEBI:58421"/>
        <dbReference type="EC" id="3.1.3.104"/>
    </reaction>
</comment>
<comment type="cofactor">
    <cofactor evidence="1">
        <name>Mg(2+)</name>
        <dbReference type="ChEBI" id="CHEBI:18420"/>
    </cofactor>
</comment>
<comment type="biophysicochemical properties">
    <kinetics>
        <KM evidence="3">5.2 mM for DL-glycerol-3-phosphate</KM>
        <Vmax evidence="3">3.0 nmol/min/mg enzyme toward DL-glycerol-3-phosphate</Vmax>
    </kinetics>
    <phDependence>
        <text evidence="3">Optimum pH is 7.0.</text>
    </phDependence>
</comment>
<comment type="subcellular location">
    <subcellularLocation>
        <location evidence="4">Mitochondrion</location>
    </subcellularLocation>
</comment>
<comment type="tissue specificity">
    <text evidence="3">Ubiquitous with highest expression in siliques. Mainly restricted to the meristem of immature flower and vascular elements of the root, shoot, leave, siliqua and developing embryo (at the protein level).</text>
</comment>
<comment type="similarity">
    <text evidence="7">Belongs to the HAD-like hydrolase superfamily. DOG/GPP family.</text>
</comment>
<comment type="sequence caution" evidence="7">
    <conflict type="erroneous initiation">
        <sequence resource="EMBL-CDS" id="BAC43699"/>
    </conflict>
    <text>Truncated N-terminus.</text>
</comment>
<comment type="sequence caution" evidence="7">
    <conflict type="erroneous initiation">
        <sequence resource="EMBL-CDS" id="CAB39605"/>
    </conflict>
    <text>Truncated N-terminus.</text>
</comment>
<comment type="sequence caution" evidence="7">
    <conflict type="erroneous initiation">
        <sequence resource="EMBL-CDS" id="CAB79439"/>
    </conflict>
    <text>Truncated N-terminus.</text>
</comment>
<sequence>MLTTPTRFVALRIPFRSSNKIPISIAPSPKVFPRKPVIRVPASLRFVATMSTPAAAVNATVTVTDAGRGSITHVIFDMDGLLLDTEKFYTEVQEKILARYNKTFDWSLKAKMMGRKAIEAARLFVDESGISDSLSAEDFIVERESMLQDLFPTSDLMPGASRLLRHLHGKGIPICIATGTHTRHFDLKTQRHRELFSLMHHVVRGDDPEVKEGKPAPDGFLAASRRFEDGPVDPRKVLVFEDAPSGVQAAKNAGMNVIMVPDSRLDKSYCNVADQVLASLLDFKPEEWGLPSFQDSHN</sequence>
<keyword id="KW-0378">Hydrolase</keyword>
<keyword id="KW-0460">Magnesium</keyword>
<keyword id="KW-0479">Metal-binding</keyword>
<keyword id="KW-0496">Mitochondrion</keyword>
<keyword id="KW-1185">Reference proteome</keyword>
<keyword id="KW-0686">Riboflavin biosynthesis</keyword>
<keyword id="KW-0809">Transit peptide</keyword>
<evidence type="ECO:0000250" key="1"/>
<evidence type="ECO:0000255" key="2"/>
<evidence type="ECO:0000269" key="3">
    <source>
    </source>
</evidence>
<evidence type="ECO:0000269" key="4">
    <source>
    </source>
</evidence>
<evidence type="ECO:0000303" key="5">
    <source>
    </source>
</evidence>
<evidence type="ECO:0000303" key="6">
    <source>
    </source>
</evidence>
<evidence type="ECO:0000305" key="7"/>
<evidence type="ECO:0000305" key="8">
    <source>
    </source>
</evidence>
<evidence type="ECO:0000312" key="9">
    <source>
        <dbReference type="Araport" id="AT4G25840"/>
    </source>
</evidence>
<evidence type="ECO:0000312" key="10">
    <source>
        <dbReference type="EMBL" id="CAB39605.1"/>
    </source>
</evidence>